<organism>
    <name type="scientific">Bacillus velezensis (strain DSM 23117 / BGSC 10A6 / LMG 26770 / FZB42)</name>
    <name type="common">Bacillus amyloliquefaciens subsp. plantarum</name>
    <dbReference type="NCBI Taxonomy" id="326423"/>
    <lineage>
        <taxon>Bacteria</taxon>
        <taxon>Bacillati</taxon>
        <taxon>Bacillota</taxon>
        <taxon>Bacilli</taxon>
        <taxon>Bacillales</taxon>
        <taxon>Bacillaceae</taxon>
        <taxon>Bacillus</taxon>
        <taxon>Bacillus amyloliquefaciens group</taxon>
    </lineage>
</organism>
<reference key="1">
    <citation type="journal article" date="2007" name="Nat. Biotechnol.">
        <title>Comparative analysis of the complete genome sequence of the plant growth-promoting bacterium Bacillus amyloliquefaciens FZB42.</title>
        <authorList>
            <person name="Chen X.H."/>
            <person name="Koumoutsi A."/>
            <person name="Scholz R."/>
            <person name="Eisenreich A."/>
            <person name="Schneider K."/>
            <person name="Heinemeyer I."/>
            <person name="Morgenstern B."/>
            <person name="Voss B."/>
            <person name="Hess W.R."/>
            <person name="Reva O."/>
            <person name="Junge H."/>
            <person name="Voigt B."/>
            <person name="Jungblut P.R."/>
            <person name="Vater J."/>
            <person name="Suessmuth R."/>
            <person name="Liesegang H."/>
            <person name="Strittmatter A."/>
            <person name="Gottschalk G."/>
            <person name="Borriss R."/>
        </authorList>
    </citation>
    <scope>NUCLEOTIDE SEQUENCE [LARGE SCALE GENOMIC DNA]</scope>
    <source>
        <strain>DSM 23117 / BGSC 10A6 / LMG 26770 / FZB42</strain>
    </source>
</reference>
<name>HRCA_BACVZ</name>
<keyword id="KW-0678">Repressor</keyword>
<keyword id="KW-0346">Stress response</keyword>
<keyword id="KW-0804">Transcription</keyword>
<keyword id="KW-0805">Transcription regulation</keyword>
<proteinExistence type="inferred from homology"/>
<comment type="function">
    <text evidence="1">Negative regulator of class I heat shock genes (grpE-dnaK-dnaJ and groELS operons). Prevents heat-shock induction of these operons.</text>
</comment>
<comment type="similarity">
    <text evidence="1">Belongs to the HrcA family.</text>
</comment>
<gene>
    <name evidence="1" type="primary">hrcA</name>
    <name type="ordered locus">RBAM_023790</name>
</gene>
<protein>
    <recommendedName>
        <fullName evidence="1">Heat-inducible transcription repressor HrcA</fullName>
    </recommendedName>
</protein>
<dbReference type="EMBL" id="CP000560">
    <property type="protein sequence ID" value="ABS74739.1"/>
    <property type="molecule type" value="Genomic_DNA"/>
</dbReference>
<dbReference type="RefSeq" id="WP_003152889.1">
    <property type="nucleotide sequence ID" value="NC_009725.2"/>
</dbReference>
<dbReference type="SMR" id="A7Z6W3"/>
<dbReference type="GeneID" id="93081517"/>
<dbReference type="KEGG" id="bay:RBAM_023790"/>
<dbReference type="HOGENOM" id="CLU_050019_1_0_9"/>
<dbReference type="Proteomes" id="UP000001120">
    <property type="component" value="Chromosome"/>
</dbReference>
<dbReference type="GO" id="GO:0003677">
    <property type="term" value="F:DNA binding"/>
    <property type="evidence" value="ECO:0007669"/>
    <property type="project" value="InterPro"/>
</dbReference>
<dbReference type="GO" id="GO:0045892">
    <property type="term" value="P:negative regulation of DNA-templated transcription"/>
    <property type="evidence" value="ECO:0007669"/>
    <property type="project" value="UniProtKB-UniRule"/>
</dbReference>
<dbReference type="FunFam" id="1.10.10.10:FF:000049">
    <property type="entry name" value="Heat-inducible transcription repressor HrcA"/>
    <property type="match status" value="1"/>
</dbReference>
<dbReference type="Gene3D" id="3.30.450.40">
    <property type="match status" value="1"/>
</dbReference>
<dbReference type="Gene3D" id="3.30.390.60">
    <property type="entry name" value="Heat-inducible transcription repressor hrca homolog, domain 3"/>
    <property type="match status" value="1"/>
</dbReference>
<dbReference type="Gene3D" id="1.10.10.10">
    <property type="entry name" value="Winged helix-like DNA-binding domain superfamily/Winged helix DNA-binding domain"/>
    <property type="match status" value="1"/>
</dbReference>
<dbReference type="HAMAP" id="MF_00081">
    <property type="entry name" value="HrcA"/>
    <property type="match status" value="1"/>
</dbReference>
<dbReference type="InterPro" id="IPR029016">
    <property type="entry name" value="GAF-like_dom_sf"/>
</dbReference>
<dbReference type="InterPro" id="IPR002571">
    <property type="entry name" value="HrcA"/>
</dbReference>
<dbReference type="InterPro" id="IPR021153">
    <property type="entry name" value="HrcA_C"/>
</dbReference>
<dbReference type="InterPro" id="IPR036388">
    <property type="entry name" value="WH-like_DNA-bd_sf"/>
</dbReference>
<dbReference type="InterPro" id="IPR036390">
    <property type="entry name" value="WH_DNA-bd_sf"/>
</dbReference>
<dbReference type="InterPro" id="IPR023120">
    <property type="entry name" value="WHTH_transcript_rep_HrcA_IDD"/>
</dbReference>
<dbReference type="NCBIfam" id="TIGR00331">
    <property type="entry name" value="hrcA"/>
    <property type="match status" value="1"/>
</dbReference>
<dbReference type="PANTHER" id="PTHR34824">
    <property type="entry name" value="HEAT-INDUCIBLE TRANSCRIPTION REPRESSOR HRCA"/>
    <property type="match status" value="1"/>
</dbReference>
<dbReference type="PANTHER" id="PTHR34824:SF1">
    <property type="entry name" value="HEAT-INDUCIBLE TRANSCRIPTION REPRESSOR HRCA"/>
    <property type="match status" value="1"/>
</dbReference>
<dbReference type="Pfam" id="PF01628">
    <property type="entry name" value="HrcA"/>
    <property type="match status" value="1"/>
</dbReference>
<dbReference type="PIRSF" id="PIRSF005485">
    <property type="entry name" value="HrcA"/>
    <property type="match status" value="1"/>
</dbReference>
<dbReference type="SUPFAM" id="SSF55781">
    <property type="entry name" value="GAF domain-like"/>
    <property type="match status" value="1"/>
</dbReference>
<dbReference type="SUPFAM" id="SSF46785">
    <property type="entry name" value="Winged helix' DNA-binding domain"/>
    <property type="match status" value="1"/>
</dbReference>
<sequence length="343" mass="38846">MLTNRQLLILQVIINDFIQSAQPVGSRTLSKKDEITFSSATIRNEMADLEELGFIEKTHSSSGRIPSEKGYRYYVDHLLSPVKLTKTDLDLIHSIFKEKIFELEKTVQKSAQILSDLTNYTSIVLGPTLSENYLKQIQIVPIQPDKAVAILVTNTGHVENRTINFPAKVDLADIEKLVNILNDRLAGVPMDELNERIFKEVVTYLRQHIANYDSILESLRSTFHPAAHVEKLFFGGKINMLNQPEFHDIERVRSLLSLIEKEQDVLKLFQSSKAGISIKIGKENDYEEMENCSLITATYTVDTKQIGSIAIIGPTRMNYSRVVSLLQHVTSDLSKAFTSLYDE</sequence>
<evidence type="ECO:0000255" key="1">
    <source>
        <dbReference type="HAMAP-Rule" id="MF_00081"/>
    </source>
</evidence>
<feature type="chain" id="PRO_1000010376" description="Heat-inducible transcription repressor HrcA">
    <location>
        <begin position="1"/>
        <end position="343"/>
    </location>
</feature>
<accession>A7Z6W3</accession>